<protein>
    <recommendedName>
        <fullName>Clathrin light chain B</fullName>
        <shortName>Lcb</shortName>
    </recommendedName>
</protein>
<dbReference type="EMBL" id="X04852">
    <property type="protein sequence ID" value="CAA28543.1"/>
    <property type="molecule type" value="mRNA"/>
</dbReference>
<dbReference type="EMBL" id="X04853">
    <property type="protein sequence ID" value="CAA28544.1"/>
    <property type="molecule type" value="mRNA"/>
</dbReference>
<dbReference type="PIR" id="C26599">
    <property type="entry name" value="C26599"/>
</dbReference>
<dbReference type="RefSeq" id="NP_776702.1">
    <molecule id="P04975-2"/>
    <property type="nucleotide sequence ID" value="NM_174277.2"/>
</dbReference>
<dbReference type="RefSeq" id="XP_005209178.1">
    <molecule id="P04975-1"/>
    <property type="nucleotide sequence ID" value="XM_005209121.5"/>
</dbReference>
<dbReference type="PDB" id="3LVG">
    <property type="method" value="X-ray"/>
    <property type="resolution" value="7.94 A"/>
    <property type="chains" value="D/E/F=89-169"/>
</dbReference>
<dbReference type="PDB" id="3LVH">
    <property type="method" value="X-ray"/>
    <property type="resolution" value="9.00 A"/>
    <property type="chains" value="D/E/F=1-169"/>
</dbReference>
<dbReference type="PDB" id="6WCJ">
    <property type="method" value="EM"/>
    <property type="resolution" value="6.30 A"/>
    <property type="chains" value="B/E/F/J/N/O=1-228"/>
</dbReference>
<dbReference type="PDBsum" id="3LVG"/>
<dbReference type="PDBsum" id="3LVH"/>
<dbReference type="PDBsum" id="6WCJ"/>
<dbReference type="EMDB" id="EMD-21608"/>
<dbReference type="EMDB" id="EMD-21611"/>
<dbReference type="SMR" id="P04975"/>
<dbReference type="BioGRID" id="159016">
    <property type="interactions" value="3"/>
</dbReference>
<dbReference type="FunCoup" id="P04975">
    <property type="interactions" value="2560"/>
</dbReference>
<dbReference type="IntAct" id="P04975">
    <property type="interactions" value="3"/>
</dbReference>
<dbReference type="MINT" id="P04975"/>
<dbReference type="STRING" id="9913.ENSBTAP00000014220"/>
<dbReference type="iPTMnet" id="P04975"/>
<dbReference type="PaxDb" id="9913-ENSBTAP00000055957"/>
<dbReference type="PeptideAtlas" id="P04975"/>
<dbReference type="Ensembl" id="ENSBTAT00000014220.6">
    <molecule id="P04975-1"/>
    <property type="protein sequence ID" value="ENSBTAP00000014220.6"/>
    <property type="gene ID" value="ENSBTAG00000010740.7"/>
</dbReference>
<dbReference type="Ensembl" id="ENSBTAT00000064630.3">
    <molecule id="P04975-2"/>
    <property type="protein sequence ID" value="ENSBTAP00000055957.3"/>
    <property type="gene ID" value="ENSBTAG00000010740.7"/>
</dbReference>
<dbReference type="GeneID" id="281698"/>
<dbReference type="KEGG" id="bta:281698"/>
<dbReference type="CTD" id="1212"/>
<dbReference type="VEuPathDB" id="HostDB:ENSBTAG00000010740"/>
<dbReference type="eggNOG" id="KOG4031">
    <property type="taxonomic scope" value="Eukaryota"/>
</dbReference>
<dbReference type="GeneTree" id="ENSGT00940000160186"/>
<dbReference type="HOGENOM" id="CLU_091462_1_0_1"/>
<dbReference type="InParanoid" id="P04975"/>
<dbReference type="OrthoDB" id="5512at2759"/>
<dbReference type="Reactome" id="R-BTA-190873">
    <property type="pathway name" value="Gap junction degradation"/>
</dbReference>
<dbReference type="Reactome" id="R-BTA-196025">
    <property type="pathway name" value="Formation of annular gap junctions"/>
</dbReference>
<dbReference type="Reactome" id="R-BTA-432720">
    <property type="pathway name" value="Lysosome Vesicle Biogenesis"/>
</dbReference>
<dbReference type="Reactome" id="R-BTA-5099900">
    <property type="pathway name" value="WNT5A-dependent internalization of FZD4"/>
</dbReference>
<dbReference type="Reactome" id="R-BTA-5140745">
    <property type="pathway name" value="WNT5A-dependent internalization of FZD2, FZD5 and ROR2"/>
</dbReference>
<dbReference type="Reactome" id="R-BTA-8856825">
    <property type="pathway name" value="Cargo recognition for clathrin-mediated endocytosis"/>
</dbReference>
<dbReference type="Reactome" id="R-BTA-8856828">
    <property type="pathway name" value="Clathrin-mediated endocytosis"/>
</dbReference>
<dbReference type="Proteomes" id="UP000009136">
    <property type="component" value="Chromosome 7"/>
</dbReference>
<dbReference type="Bgee" id="ENSBTAG00000010740">
    <property type="expression patterns" value="Expressed in digestive system secreted substance and 105 other cell types or tissues"/>
</dbReference>
<dbReference type="GO" id="GO:0030118">
    <property type="term" value="C:clathrin coat"/>
    <property type="evidence" value="ECO:0000250"/>
    <property type="project" value="UniProtKB"/>
</dbReference>
<dbReference type="GO" id="GO:0030132">
    <property type="term" value="C:clathrin coat of coated pit"/>
    <property type="evidence" value="ECO:0007669"/>
    <property type="project" value="InterPro"/>
</dbReference>
<dbReference type="GO" id="GO:0030130">
    <property type="term" value="C:clathrin coat of trans-Golgi network vesicle"/>
    <property type="evidence" value="ECO:0007669"/>
    <property type="project" value="InterPro"/>
</dbReference>
<dbReference type="GO" id="GO:0030125">
    <property type="term" value="C:clathrin vesicle coat"/>
    <property type="evidence" value="ECO:0000318"/>
    <property type="project" value="GO_Central"/>
</dbReference>
<dbReference type="GO" id="GO:0005886">
    <property type="term" value="C:plasma membrane"/>
    <property type="evidence" value="ECO:0000318"/>
    <property type="project" value="GO_Central"/>
</dbReference>
<dbReference type="GO" id="GO:0030672">
    <property type="term" value="C:synaptic vesicle membrane"/>
    <property type="evidence" value="ECO:0000318"/>
    <property type="project" value="GO_Central"/>
</dbReference>
<dbReference type="GO" id="GO:0032050">
    <property type="term" value="F:clathrin heavy chain binding"/>
    <property type="evidence" value="ECO:0000318"/>
    <property type="project" value="GO_Central"/>
</dbReference>
<dbReference type="GO" id="GO:0005198">
    <property type="term" value="F:structural molecule activity"/>
    <property type="evidence" value="ECO:0007669"/>
    <property type="project" value="InterPro"/>
</dbReference>
<dbReference type="GO" id="GO:0072583">
    <property type="term" value="P:clathrin-dependent endocytosis"/>
    <property type="evidence" value="ECO:0000318"/>
    <property type="project" value="GO_Central"/>
</dbReference>
<dbReference type="GO" id="GO:0006886">
    <property type="term" value="P:intracellular protein transport"/>
    <property type="evidence" value="ECO:0007669"/>
    <property type="project" value="InterPro"/>
</dbReference>
<dbReference type="InterPro" id="IPR000996">
    <property type="entry name" value="Clathrin_L-chain"/>
</dbReference>
<dbReference type="PANTHER" id="PTHR10639">
    <property type="entry name" value="CLATHRIN LIGHT CHAIN"/>
    <property type="match status" value="1"/>
</dbReference>
<dbReference type="PANTHER" id="PTHR10639:SF28">
    <property type="entry name" value="CLATHRIN LIGHT CHAIN B"/>
    <property type="match status" value="1"/>
</dbReference>
<dbReference type="Pfam" id="PF01086">
    <property type="entry name" value="Clathrin_lg_ch"/>
    <property type="match status" value="1"/>
</dbReference>
<dbReference type="PROSITE" id="PS00224">
    <property type="entry name" value="CLATHRIN_LIGHT_CHN_1"/>
    <property type="match status" value="1"/>
</dbReference>
<dbReference type="PROSITE" id="PS00581">
    <property type="entry name" value="CLATHRIN_LIGHT_CHN_2"/>
    <property type="match status" value="1"/>
</dbReference>
<reference key="1">
    <citation type="journal article" date="1987" name="Nature">
        <title>Clathrin light chains contain brain-specific insertion sequences and a region of homology with intermediate filaments.</title>
        <authorList>
            <person name="Jackson A.P."/>
            <person name="Seow H.-F."/>
            <person name="Holmes N."/>
            <person name="Drickamer K."/>
            <person name="Parham P."/>
        </authorList>
    </citation>
    <scope>NUCLEOTIDE SEQUENCE [MRNA]</scope>
</reference>
<reference key="2">
    <citation type="journal article" date="1988" name="J. Biol. Chem.">
        <title>Identification of the phosphorylation sites of clathrin light chain LCb.</title>
        <authorList>
            <person name="Hill B.L."/>
            <person name="Drickamer K."/>
            <person name="Brodsky F.M."/>
            <person name="Parham P."/>
        </authorList>
    </citation>
    <scope>PROTEIN SEQUENCE OF 9-27</scope>
    <scope>PHOSPHORYLATION AT SER-11 AND SER-13</scope>
</reference>
<reference key="3">
    <citation type="journal article" date="1987" name="Nature">
        <title>Localization of clathrin light-chain sequences mediating heavy-chain binding and coated vesicle diversity.</title>
        <authorList>
            <person name="Brodsky F.M."/>
            <person name="Galloway C.J."/>
            <person name="Blank G.S."/>
            <person name="Jackson A.P."/>
            <person name="Seow H.-F."/>
            <person name="Drickamer K."/>
            <person name="Parham P."/>
        </authorList>
    </citation>
    <scope>DOMAIN CLATHRIN HEAVY CHAIN BINDING</scope>
</reference>
<reference key="4">
    <citation type="journal article" date="1989" name="Biochem. J.">
        <title>The occurrence of disulphide bonds in purified clathrin light chains.</title>
        <authorList>
            <person name="Parham P."/>
            <person name="Brodsky F.M."/>
            <person name="Drickamer K."/>
        </authorList>
    </citation>
    <scope>DISULFIDE BONDS</scope>
</reference>
<keyword id="KW-0002">3D-structure</keyword>
<keyword id="KW-0007">Acetylation</keyword>
<keyword id="KW-0025">Alternative splicing</keyword>
<keyword id="KW-0106">Calcium</keyword>
<keyword id="KW-0168">Coated pit</keyword>
<keyword id="KW-0968">Cytoplasmic vesicle</keyword>
<keyword id="KW-0903">Direct protein sequencing</keyword>
<keyword id="KW-1015">Disulfide bond</keyword>
<keyword id="KW-0472">Membrane</keyword>
<keyword id="KW-0597">Phosphoprotein</keyword>
<keyword id="KW-1185">Reference proteome</keyword>
<sequence>MADDFGFFSSSESGAPEAAEEDPAAAFLAQQESEIAGIENDEGFGAPAGSQGGLAQPGPASGASEDMGATVNGDVFQEANGPADGYAAIAQADRLTQEPESIRKWREEQRKRLQELDAASKVMEQEWREKAKKDLEEWNQRQSEQVEKNKINNRIADKAFYQQPDADIIGYVASEEAFVKESKEETPGTEWEKVAQLCDFNPKSSKQCKDVSRLRSVLMSLKQTPLSR</sequence>
<comment type="function">
    <text>Clathrin is the major protein of the polyhedral coat of coated pits and vesicles.</text>
</comment>
<comment type="subunit">
    <text>Clathrin coats are formed from molecules containing 3 heavy chains and 3 light chains. Interacts (via N-terminus) with HIP1. Interacts with HIP1R.</text>
</comment>
<comment type="subcellular location">
    <subcellularLocation>
        <location>Cytoplasmic vesicle membrane</location>
        <topology>Peripheral membrane protein</topology>
        <orientation>Cytoplasmic side</orientation>
    </subcellularLocation>
    <subcellularLocation>
        <location>Membrane</location>
        <location>Coated pit</location>
        <topology>Peripheral membrane protein</topology>
        <orientation>Cytoplasmic side</orientation>
    </subcellularLocation>
    <text>Cytoplasmic face of coated pits and vesicles.</text>
</comment>
<comment type="alternative products">
    <event type="alternative splicing"/>
    <isoform>
        <id>P04975-1</id>
        <name>Brain</name>
        <sequence type="displayed"/>
    </isoform>
    <isoform>
        <id>P04975-2</id>
        <name>Non-brain</name>
        <sequence type="described" ref="VSP_001097"/>
    </isoform>
</comment>
<comment type="similarity">
    <text evidence="7">Belongs to the clathrin light chain family.</text>
</comment>
<gene>
    <name type="primary">CLTB</name>
    <name type="synonym">CLTLB</name>
</gene>
<feature type="chain" id="PRO_0000205770" description="Clathrin light chain B">
    <location>
        <begin position="1"/>
        <end position="228"/>
    </location>
</feature>
<feature type="region of interest" description="Disordered" evidence="4">
    <location>
        <begin position="1"/>
        <end position="80"/>
    </location>
</feature>
<feature type="region of interest" description="Involved in binding clathrin heavy chain">
    <location>
        <begin position="92"/>
        <end position="154"/>
    </location>
</feature>
<feature type="compositionally biased region" description="Low complexity" evidence="4">
    <location>
        <begin position="1"/>
        <end position="17"/>
    </location>
</feature>
<feature type="modified residue" description="Blocked amino end (Met)">
    <location>
        <position position="1"/>
    </location>
</feature>
<feature type="modified residue" description="Phosphoserine" evidence="6">
    <location>
        <position position="11"/>
    </location>
</feature>
<feature type="modified residue" description="Phosphoserine" evidence="6">
    <location>
        <position position="13"/>
    </location>
</feature>
<feature type="modified residue" description="Phosphothreonine" evidence="2">
    <location>
        <position position="186"/>
    </location>
</feature>
<feature type="modified residue" description="N6-acetyllysine" evidence="3">
    <location>
        <position position="203"/>
    </location>
</feature>
<feature type="modified residue" description="Phosphoserine" evidence="1">
    <location>
        <position position="216"/>
    </location>
</feature>
<feature type="disulfide bond" evidence="5">
    <location>
        <begin position="198"/>
        <end position="208"/>
    </location>
</feature>
<feature type="splice variant" id="VSP_001097" description="In isoform Non-brain." evidence="7">
    <location>
        <begin position="155"/>
        <end position="172"/>
    </location>
</feature>
<proteinExistence type="evidence at protein level"/>
<accession>P04975</accession>
<organism>
    <name type="scientific">Bos taurus</name>
    <name type="common">Bovine</name>
    <dbReference type="NCBI Taxonomy" id="9913"/>
    <lineage>
        <taxon>Eukaryota</taxon>
        <taxon>Metazoa</taxon>
        <taxon>Chordata</taxon>
        <taxon>Craniata</taxon>
        <taxon>Vertebrata</taxon>
        <taxon>Euteleostomi</taxon>
        <taxon>Mammalia</taxon>
        <taxon>Eutheria</taxon>
        <taxon>Laurasiatheria</taxon>
        <taxon>Artiodactyla</taxon>
        <taxon>Ruminantia</taxon>
        <taxon>Pecora</taxon>
        <taxon>Bovidae</taxon>
        <taxon>Bovinae</taxon>
        <taxon>Bos</taxon>
    </lineage>
</organism>
<evidence type="ECO:0000250" key="1">
    <source>
        <dbReference type="UniProtKB" id="P09496"/>
    </source>
</evidence>
<evidence type="ECO:0000250" key="2">
    <source>
        <dbReference type="UniProtKB" id="P09497"/>
    </source>
</evidence>
<evidence type="ECO:0000250" key="3">
    <source>
        <dbReference type="UniProtKB" id="Q6IRU5"/>
    </source>
</evidence>
<evidence type="ECO:0000256" key="4">
    <source>
        <dbReference type="SAM" id="MobiDB-lite"/>
    </source>
</evidence>
<evidence type="ECO:0000269" key="5">
    <source>
    </source>
</evidence>
<evidence type="ECO:0000269" key="6">
    <source>
    </source>
</evidence>
<evidence type="ECO:0000305" key="7"/>
<name>CLCB_BOVIN</name>